<organism>
    <name type="scientific">Jasminum nudiflorum</name>
    <name type="common">Winter jasmine</name>
    <dbReference type="NCBI Taxonomy" id="126431"/>
    <lineage>
        <taxon>Eukaryota</taxon>
        <taxon>Viridiplantae</taxon>
        <taxon>Streptophyta</taxon>
        <taxon>Embryophyta</taxon>
        <taxon>Tracheophyta</taxon>
        <taxon>Spermatophyta</taxon>
        <taxon>Magnoliopsida</taxon>
        <taxon>eudicotyledons</taxon>
        <taxon>Gunneridae</taxon>
        <taxon>Pentapetalae</taxon>
        <taxon>asterids</taxon>
        <taxon>lamiids</taxon>
        <taxon>Lamiales</taxon>
        <taxon>Oleaceae</taxon>
        <taxon>Jasmineae</taxon>
        <taxon>Jasminum</taxon>
    </lineage>
</organism>
<sequence>MSHSVKIYDTCIGCTQCVRACPTDVLEMIPWDGCKAKQIASAPRTEDCVGCKRCESACPTDFLSVRVYLWHETTRSMGLAY</sequence>
<name>PSAC_JASNU</name>
<protein>
    <recommendedName>
        <fullName evidence="2">Photosystem I iron-sulfur center</fullName>
        <ecNumber evidence="2">1.97.1.12</ecNumber>
    </recommendedName>
    <alternativeName>
        <fullName evidence="2">9 kDa polypeptide</fullName>
    </alternativeName>
    <alternativeName>
        <fullName evidence="2">PSI-C</fullName>
    </alternativeName>
    <alternativeName>
        <fullName evidence="2">Photosystem I subunit VII</fullName>
    </alternativeName>
    <alternativeName>
        <fullName evidence="2">PsaC</fullName>
    </alternativeName>
</protein>
<feature type="initiator methionine" description="Removed" evidence="1">
    <location>
        <position position="1"/>
    </location>
</feature>
<feature type="chain" id="PRO_0000275985" description="Photosystem I iron-sulfur center">
    <location>
        <begin position="2"/>
        <end position="81"/>
    </location>
</feature>
<feature type="domain" description="4Fe-4S ferredoxin-type 1" evidence="2">
    <location>
        <begin position="2"/>
        <end position="31"/>
    </location>
</feature>
<feature type="domain" description="4Fe-4S ferredoxin-type 2" evidence="2">
    <location>
        <begin position="39"/>
        <end position="68"/>
    </location>
</feature>
<feature type="binding site" evidence="2">
    <location>
        <position position="11"/>
    </location>
    <ligand>
        <name>[4Fe-4S] cluster</name>
        <dbReference type="ChEBI" id="CHEBI:49883"/>
        <label>1</label>
    </ligand>
</feature>
<feature type="binding site" evidence="2">
    <location>
        <position position="14"/>
    </location>
    <ligand>
        <name>[4Fe-4S] cluster</name>
        <dbReference type="ChEBI" id="CHEBI:49883"/>
        <label>1</label>
    </ligand>
</feature>
<feature type="binding site" evidence="2">
    <location>
        <position position="17"/>
    </location>
    <ligand>
        <name>[4Fe-4S] cluster</name>
        <dbReference type="ChEBI" id="CHEBI:49883"/>
        <label>1</label>
    </ligand>
</feature>
<feature type="binding site" evidence="2">
    <location>
        <position position="21"/>
    </location>
    <ligand>
        <name>[4Fe-4S] cluster</name>
        <dbReference type="ChEBI" id="CHEBI:49883"/>
        <label>2</label>
    </ligand>
</feature>
<feature type="binding site" evidence="2">
    <location>
        <position position="48"/>
    </location>
    <ligand>
        <name>[4Fe-4S] cluster</name>
        <dbReference type="ChEBI" id="CHEBI:49883"/>
        <label>2</label>
    </ligand>
</feature>
<feature type="binding site" evidence="2">
    <location>
        <position position="51"/>
    </location>
    <ligand>
        <name>[4Fe-4S] cluster</name>
        <dbReference type="ChEBI" id="CHEBI:49883"/>
        <label>2</label>
    </ligand>
</feature>
<feature type="binding site" evidence="2">
    <location>
        <position position="54"/>
    </location>
    <ligand>
        <name>[4Fe-4S] cluster</name>
        <dbReference type="ChEBI" id="CHEBI:49883"/>
        <label>2</label>
    </ligand>
</feature>
<feature type="binding site" evidence="2">
    <location>
        <position position="58"/>
    </location>
    <ligand>
        <name>[4Fe-4S] cluster</name>
        <dbReference type="ChEBI" id="CHEBI:49883"/>
        <label>1</label>
    </ligand>
</feature>
<keyword id="KW-0004">4Fe-4S</keyword>
<keyword id="KW-0150">Chloroplast</keyword>
<keyword id="KW-0249">Electron transport</keyword>
<keyword id="KW-0408">Iron</keyword>
<keyword id="KW-0411">Iron-sulfur</keyword>
<keyword id="KW-0472">Membrane</keyword>
<keyword id="KW-0479">Metal-binding</keyword>
<keyword id="KW-0560">Oxidoreductase</keyword>
<keyword id="KW-0602">Photosynthesis</keyword>
<keyword id="KW-0603">Photosystem I</keyword>
<keyword id="KW-0934">Plastid</keyword>
<keyword id="KW-0677">Repeat</keyword>
<keyword id="KW-0793">Thylakoid</keyword>
<keyword id="KW-0813">Transport</keyword>
<comment type="function">
    <text evidence="2">Apoprotein for the two 4Fe-4S centers FA and FB of photosystem I (PSI); essential for photochemical activity. FB is the terminal electron acceptor of PSI, donating electrons to ferredoxin. The C-terminus interacts with PsaA/B/D and helps assemble the protein into the PSI complex. Required for binding of PsaD and PsaE to PSI. PSI is a plastocyanin-ferredoxin oxidoreductase, converting photonic excitation into a charge separation, which transfers an electron from the donor P700 chlorophyll pair to the spectroscopically characterized acceptors A0, A1, FX, FA and FB in turn.</text>
</comment>
<comment type="catalytic activity">
    <reaction evidence="2">
        <text>reduced [plastocyanin] + hnu + oxidized [2Fe-2S]-[ferredoxin] = oxidized [plastocyanin] + reduced [2Fe-2S]-[ferredoxin]</text>
        <dbReference type="Rhea" id="RHEA:30407"/>
        <dbReference type="Rhea" id="RHEA-COMP:10000"/>
        <dbReference type="Rhea" id="RHEA-COMP:10001"/>
        <dbReference type="Rhea" id="RHEA-COMP:10039"/>
        <dbReference type="Rhea" id="RHEA-COMP:10040"/>
        <dbReference type="ChEBI" id="CHEBI:29036"/>
        <dbReference type="ChEBI" id="CHEBI:30212"/>
        <dbReference type="ChEBI" id="CHEBI:33737"/>
        <dbReference type="ChEBI" id="CHEBI:33738"/>
        <dbReference type="ChEBI" id="CHEBI:49552"/>
        <dbReference type="EC" id="1.97.1.12"/>
    </reaction>
</comment>
<comment type="cofactor">
    <cofactor evidence="2">
        <name>[4Fe-4S] cluster</name>
        <dbReference type="ChEBI" id="CHEBI:49883"/>
    </cofactor>
    <text evidence="2">Binds 2 [4Fe-4S] clusters. Cluster 2 is most probably the spectroscopically characterized electron acceptor FA and cluster 1 is most probably FB.</text>
</comment>
<comment type="subunit">
    <text evidence="2">The eukaryotic PSI reaction center is composed of at least 11 subunits.</text>
</comment>
<comment type="subcellular location">
    <subcellularLocation>
        <location evidence="2">Plastid</location>
        <location evidence="2">Chloroplast thylakoid membrane</location>
        <topology evidence="2">Peripheral membrane protein</topology>
        <orientation evidence="2">Stromal side</orientation>
    </subcellularLocation>
</comment>
<accession>Q06R79</accession>
<dbReference type="EC" id="1.97.1.12" evidence="2"/>
<dbReference type="EMBL" id="DQ673255">
    <property type="protein sequence ID" value="ABG74680.1"/>
    <property type="molecule type" value="Genomic_DNA"/>
</dbReference>
<dbReference type="RefSeq" id="YP_778542.1">
    <property type="nucleotide sequence ID" value="NC_008407.1"/>
</dbReference>
<dbReference type="SMR" id="Q06R79"/>
<dbReference type="GeneID" id="4319833"/>
<dbReference type="GO" id="GO:0009535">
    <property type="term" value="C:chloroplast thylakoid membrane"/>
    <property type="evidence" value="ECO:0007669"/>
    <property type="project" value="UniProtKB-SubCell"/>
</dbReference>
<dbReference type="GO" id="GO:0009522">
    <property type="term" value="C:photosystem I"/>
    <property type="evidence" value="ECO:0007669"/>
    <property type="project" value="UniProtKB-KW"/>
</dbReference>
<dbReference type="GO" id="GO:0051539">
    <property type="term" value="F:4 iron, 4 sulfur cluster binding"/>
    <property type="evidence" value="ECO:0007669"/>
    <property type="project" value="UniProtKB-KW"/>
</dbReference>
<dbReference type="GO" id="GO:0009055">
    <property type="term" value="F:electron transfer activity"/>
    <property type="evidence" value="ECO:0007669"/>
    <property type="project" value="UniProtKB-UniRule"/>
</dbReference>
<dbReference type="GO" id="GO:0046872">
    <property type="term" value="F:metal ion binding"/>
    <property type="evidence" value="ECO:0007669"/>
    <property type="project" value="UniProtKB-KW"/>
</dbReference>
<dbReference type="GO" id="GO:0016491">
    <property type="term" value="F:oxidoreductase activity"/>
    <property type="evidence" value="ECO:0007669"/>
    <property type="project" value="UniProtKB-KW"/>
</dbReference>
<dbReference type="GO" id="GO:0009773">
    <property type="term" value="P:photosynthetic electron transport in photosystem I"/>
    <property type="evidence" value="ECO:0007669"/>
    <property type="project" value="InterPro"/>
</dbReference>
<dbReference type="FunFam" id="3.30.70.20:FF:000001">
    <property type="entry name" value="Photosystem I iron-sulfur center"/>
    <property type="match status" value="1"/>
</dbReference>
<dbReference type="Gene3D" id="3.30.70.20">
    <property type="match status" value="1"/>
</dbReference>
<dbReference type="HAMAP" id="MF_01303">
    <property type="entry name" value="PSI_PsaC"/>
    <property type="match status" value="1"/>
</dbReference>
<dbReference type="InterPro" id="IPR017896">
    <property type="entry name" value="4Fe4S_Fe-S-bd"/>
</dbReference>
<dbReference type="InterPro" id="IPR017900">
    <property type="entry name" value="4Fe4S_Fe_S_CS"/>
</dbReference>
<dbReference type="InterPro" id="IPR050157">
    <property type="entry name" value="PSI_iron-sulfur_center"/>
</dbReference>
<dbReference type="InterPro" id="IPR017491">
    <property type="entry name" value="PSI_PsaC"/>
</dbReference>
<dbReference type="NCBIfam" id="TIGR03048">
    <property type="entry name" value="PS_I_psaC"/>
    <property type="match status" value="1"/>
</dbReference>
<dbReference type="PANTHER" id="PTHR24960:SF79">
    <property type="entry name" value="PHOTOSYSTEM I IRON-SULFUR CENTER"/>
    <property type="match status" value="1"/>
</dbReference>
<dbReference type="PANTHER" id="PTHR24960">
    <property type="entry name" value="PHOTOSYSTEM I IRON-SULFUR CENTER-RELATED"/>
    <property type="match status" value="1"/>
</dbReference>
<dbReference type="Pfam" id="PF14697">
    <property type="entry name" value="Fer4_21"/>
    <property type="match status" value="1"/>
</dbReference>
<dbReference type="SUPFAM" id="SSF54862">
    <property type="entry name" value="4Fe-4S ferredoxins"/>
    <property type="match status" value="1"/>
</dbReference>
<dbReference type="PROSITE" id="PS00198">
    <property type="entry name" value="4FE4S_FER_1"/>
    <property type="match status" value="2"/>
</dbReference>
<dbReference type="PROSITE" id="PS51379">
    <property type="entry name" value="4FE4S_FER_2"/>
    <property type="match status" value="2"/>
</dbReference>
<gene>
    <name evidence="2" type="primary">psaC</name>
    <name type="ORF">JNC1290</name>
</gene>
<evidence type="ECO:0000250" key="1"/>
<evidence type="ECO:0000255" key="2">
    <source>
        <dbReference type="HAMAP-Rule" id="MF_01303"/>
    </source>
</evidence>
<proteinExistence type="inferred from homology"/>
<reference key="1">
    <citation type="journal article" date="2007" name="Mol. Biol. Evol.">
        <title>Gene relocations within chloroplast genomes of Jasminum and Menodora (Oleaceae) are due to multiple, overlapping inversions.</title>
        <authorList>
            <person name="Lee H.-L."/>
            <person name="Jansen R.K."/>
            <person name="Chumley T.W."/>
            <person name="Kim K.-J."/>
        </authorList>
    </citation>
    <scope>NUCLEOTIDE SEQUENCE [LARGE SCALE GENOMIC DNA]</scope>
</reference>
<geneLocation type="chloroplast"/>